<name>PRM1_ASPCL</name>
<sequence>MLFSRSGHSIFPLLPPYAAHAPTTNQGHIITMPPDGLTPYLGLRARLSQVWINRWTILLLLVLVRVLMAASGLQADMGTAKREALSACSSVESMGSSMASMPHYLSQGVNELTASGVETAVSGLKSMLMLTVTGVEELVLFIIKVLYQTYLCLFTLAVRGSVHVAVGVIKDAADFLNSTVKEVGDDIGKVVSTFEDGFNKFLDSVNSVASVFGGSVPTLDLNSSISTLENLQLPSSIDKGLDKLNNSLPTFDEVNNFTQTVLRTPFEEVKKLVNQSLGTYTFDRSLLPIPAKEQLKFCEGNDGIDSFFDNVGDLVMTARKIFIAVLILAAVLACIPMAWQEIRRWRSMKERSQLVRKEAHDPMDIVYIVSRPYTAAAGIKAASRFSNSRRQILVRWAIAYATTPAALFVLCLGIAGLFSCLCQYLLLHAVEKTVPELSTQVGAFADKVVDKLENASAAWANDANGVIGHMNQDLNQNVFGWVNTSTTALNDTLNTFVDKTTGVLNETFGGTILYEPLMDVFGCLIGLKVAGIQKGLTWVHDHAHIDFPLLPNDTFSRGAAASIASNNSDASDSFLADAGDQTSNKITEVVIRVVDKVEEGIRMETIISTAILLLWVFIALVGIVRALTLFWMRDRSRGEGGGAPSTSHHTSDAGGFDDVPLTAIPNPSAHSAPAPRYEATISTVVASRAIPTSNSFQHQDEKMGFAGERQYGSALKVDGAPDLRGSAYVEYGVEKH</sequence>
<keyword id="KW-1003">Cell membrane</keyword>
<keyword id="KW-0184">Conjugation</keyword>
<keyword id="KW-0325">Glycoprotein</keyword>
<keyword id="KW-0472">Membrane</keyword>
<keyword id="KW-1185">Reference proteome</keyword>
<keyword id="KW-0812">Transmembrane</keyword>
<keyword id="KW-1133">Transmembrane helix</keyword>
<organism>
    <name type="scientific">Aspergillus clavatus (strain ATCC 1007 / CBS 513.65 / DSM 816 / NCTC 3887 / NRRL 1 / QM 1276 / 107)</name>
    <dbReference type="NCBI Taxonomy" id="344612"/>
    <lineage>
        <taxon>Eukaryota</taxon>
        <taxon>Fungi</taxon>
        <taxon>Dikarya</taxon>
        <taxon>Ascomycota</taxon>
        <taxon>Pezizomycotina</taxon>
        <taxon>Eurotiomycetes</taxon>
        <taxon>Eurotiomycetidae</taxon>
        <taxon>Eurotiales</taxon>
        <taxon>Aspergillaceae</taxon>
        <taxon>Aspergillus</taxon>
        <taxon>Aspergillus subgen. Fumigati</taxon>
    </lineage>
</organism>
<accession>A1CI53</accession>
<reference key="1">
    <citation type="journal article" date="2008" name="PLoS Genet.">
        <title>Genomic islands in the pathogenic filamentous fungus Aspergillus fumigatus.</title>
        <authorList>
            <person name="Fedorova N.D."/>
            <person name="Khaldi N."/>
            <person name="Joardar V.S."/>
            <person name="Maiti R."/>
            <person name="Amedeo P."/>
            <person name="Anderson M.J."/>
            <person name="Crabtree J."/>
            <person name="Silva J.C."/>
            <person name="Badger J.H."/>
            <person name="Albarraq A."/>
            <person name="Angiuoli S."/>
            <person name="Bussey H."/>
            <person name="Bowyer P."/>
            <person name="Cotty P.J."/>
            <person name="Dyer P.S."/>
            <person name="Egan A."/>
            <person name="Galens K."/>
            <person name="Fraser-Liggett C.M."/>
            <person name="Haas B.J."/>
            <person name="Inman J.M."/>
            <person name="Kent R."/>
            <person name="Lemieux S."/>
            <person name="Malavazi I."/>
            <person name="Orvis J."/>
            <person name="Roemer T."/>
            <person name="Ronning C.M."/>
            <person name="Sundaram J.P."/>
            <person name="Sutton G."/>
            <person name="Turner G."/>
            <person name="Venter J.C."/>
            <person name="White O.R."/>
            <person name="Whitty B.R."/>
            <person name="Youngman P."/>
            <person name="Wolfe K.H."/>
            <person name="Goldman G.H."/>
            <person name="Wortman J.R."/>
            <person name="Jiang B."/>
            <person name="Denning D.W."/>
            <person name="Nierman W.C."/>
        </authorList>
    </citation>
    <scope>NUCLEOTIDE SEQUENCE [LARGE SCALE GENOMIC DNA]</scope>
    <source>
        <strain>ATCC 1007 / CBS 513.65 / DSM 816 / NCTC 3887 / NRRL 1 / QM 1276 / 107</strain>
    </source>
</reference>
<evidence type="ECO:0000250" key="1"/>
<evidence type="ECO:0000255" key="2"/>
<evidence type="ECO:0000256" key="3">
    <source>
        <dbReference type="SAM" id="MobiDB-lite"/>
    </source>
</evidence>
<evidence type="ECO:0000305" key="4"/>
<proteinExistence type="inferred from homology"/>
<feature type="chain" id="PRO_0000337267" description="Plasma membrane fusion protein prm1">
    <location>
        <begin position="1"/>
        <end position="736"/>
    </location>
</feature>
<feature type="topological domain" description="Extracellular" evidence="1">
    <location>
        <begin position="1"/>
        <end position="54"/>
    </location>
</feature>
<feature type="transmembrane region" description="Helical" evidence="2">
    <location>
        <begin position="55"/>
        <end position="75"/>
    </location>
</feature>
<feature type="topological domain" description="Cytoplasmic" evidence="1">
    <location>
        <begin position="76"/>
        <end position="137"/>
    </location>
</feature>
<feature type="transmembrane region" description="Helical" evidence="2">
    <location>
        <begin position="138"/>
        <end position="158"/>
    </location>
</feature>
<feature type="topological domain" description="Extracellular" evidence="1">
    <location>
        <begin position="159"/>
        <end position="320"/>
    </location>
</feature>
<feature type="transmembrane region" description="Helical" evidence="2">
    <location>
        <begin position="321"/>
        <end position="341"/>
    </location>
</feature>
<feature type="topological domain" description="Cytoplasmic" evidence="1">
    <location>
        <begin position="342"/>
        <end position="397"/>
    </location>
</feature>
<feature type="transmembrane region" description="Helical" evidence="2">
    <location>
        <begin position="398"/>
        <end position="418"/>
    </location>
</feature>
<feature type="topological domain" description="Extracellular" evidence="1">
    <location>
        <begin position="419"/>
        <end position="603"/>
    </location>
</feature>
<feature type="transmembrane region" description="Helical" evidence="2">
    <location>
        <begin position="604"/>
        <end position="624"/>
    </location>
</feature>
<feature type="topological domain" description="Cytoplasmic" evidence="1">
    <location>
        <begin position="625"/>
        <end position="736"/>
    </location>
</feature>
<feature type="region of interest" description="Disordered" evidence="3">
    <location>
        <begin position="638"/>
        <end position="675"/>
    </location>
</feature>
<feature type="glycosylation site" description="N-linked (GlcNAc...) asparagine" evidence="2">
    <location>
        <position position="177"/>
    </location>
</feature>
<feature type="glycosylation site" description="N-linked (GlcNAc...) asparagine" evidence="2">
    <location>
        <position position="222"/>
    </location>
</feature>
<feature type="glycosylation site" description="N-linked (GlcNAc...) asparagine" evidence="2">
    <location>
        <position position="245"/>
    </location>
</feature>
<feature type="glycosylation site" description="N-linked (GlcNAc...) asparagine" evidence="2">
    <location>
        <position position="256"/>
    </location>
</feature>
<feature type="glycosylation site" description="N-linked (GlcNAc...) asparagine" evidence="2">
    <location>
        <position position="274"/>
    </location>
</feature>
<feature type="glycosylation site" description="N-linked (GlcNAc...) asparagine" evidence="2">
    <location>
        <position position="454"/>
    </location>
</feature>
<feature type="glycosylation site" description="N-linked (GlcNAc...) asparagine" evidence="2">
    <location>
        <position position="483"/>
    </location>
</feature>
<feature type="glycosylation site" description="N-linked (GlcNAc...) asparagine" evidence="2">
    <location>
        <position position="490"/>
    </location>
</feature>
<feature type="glycosylation site" description="N-linked (GlcNAc...) asparagine" evidence="2">
    <location>
        <position position="505"/>
    </location>
</feature>
<feature type="glycosylation site" description="N-linked (GlcNAc...) asparagine" evidence="2">
    <location>
        <position position="552"/>
    </location>
</feature>
<feature type="glycosylation site" description="N-linked (GlcNAc...) asparagine" evidence="2">
    <location>
        <position position="566"/>
    </location>
</feature>
<gene>
    <name type="primary">prm1</name>
    <name type="ORF">ACLA_050300</name>
</gene>
<comment type="function">
    <text evidence="1">Involved in cell fusion during mating by stabilizing the plasma membrane fusion event.</text>
</comment>
<comment type="subcellular location">
    <subcellularLocation>
        <location evidence="1">Cell membrane</location>
        <topology evidence="1">Multi-pass membrane protein</topology>
    </subcellularLocation>
</comment>
<comment type="similarity">
    <text evidence="4">Belongs to the PRM1 family.</text>
</comment>
<comment type="sequence caution" evidence="4">
    <conflict type="erroneous initiation">
        <sequence resource="EMBL-CDS" id="EAW10558"/>
    </conflict>
</comment>
<dbReference type="EMBL" id="DS027054">
    <property type="protein sequence ID" value="EAW10558.1"/>
    <property type="status" value="ALT_INIT"/>
    <property type="molecule type" value="Genomic_DNA"/>
</dbReference>
<dbReference type="RefSeq" id="XP_001271984.1">
    <property type="nucleotide sequence ID" value="XM_001271983.1"/>
</dbReference>
<dbReference type="SMR" id="A1CI53"/>
<dbReference type="STRING" id="344612.A1CI53"/>
<dbReference type="GlyCosmos" id="A1CI53">
    <property type="glycosylation" value="11 sites, No reported glycans"/>
</dbReference>
<dbReference type="EnsemblFungi" id="EAW10558">
    <property type="protein sequence ID" value="EAW10558"/>
    <property type="gene ID" value="ACLA_050300"/>
</dbReference>
<dbReference type="GeneID" id="4703769"/>
<dbReference type="KEGG" id="act:ACLA_050300"/>
<dbReference type="eggNOG" id="ENOG502QRP5">
    <property type="taxonomic scope" value="Eukaryota"/>
</dbReference>
<dbReference type="OrthoDB" id="5356111at2759"/>
<dbReference type="Proteomes" id="UP000006701">
    <property type="component" value="Unassembled WGS sequence"/>
</dbReference>
<dbReference type="GO" id="GO:0043332">
    <property type="term" value="C:mating projection tip"/>
    <property type="evidence" value="ECO:0007669"/>
    <property type="project" value="InterPro"/>
</dbReference>
<dbReference type="GO" id="GO:0005886">
    <property type="term" value="C:plasma membrane"/>
    <property type="evidence" value="ECO:0007669"/>
    <property type="project" value="UniProtKB-SubCell"/>
</dbReference>
<dbReference type="GO" id="GO:0032220">
    <property type="term" value="P:plasma membrane fusion involved in cytogamy"/>
    <property type="evidence" value="ECO:0007669"/>
    <property type="project" value="TreeGrafter"/>
</dbReference>
<dbReference type="InterPro" id="IPR026777">
    <property type="entry name" value="PRM1"/>
</dbReference>
<dbReference type="PANTHER" id="PTHR31030">
    <property type="entry name" value="PLASMA MEMBRANE FUSION PROTEIN PRM1"/>
    <property type="match status" value="1"/>
</dbReference>
<dbReference type="PANTHER" id="PTHR31030:SF1">
    <property type="entry name" value="PLASMA MEMBRANE FUSION PROTEIN PRM1"/>
    <property type="match status" value="1"/>
</dbReference>
<protein>
    <recommendedName>
        <fullName>Plasma membrane fusion protein prm1</fullName>
    </recommendedName>
</protein>